<organism>
    <name type="scientific">Salmonella dublin (strain CT_02021853)</name>
    <dbReference type="NCBI Taxonomy" id="439851"/>
    <lineage>
        <taxon>Bacteria</taxon>
        <taxon>Pseudomonadati</taxon>
        <taxon>Pseudomonadota</taxon>
        <taxon>Gammaproteobacteria</taxon>
        <taxon>Enterobacterales</taxon>
        <taxon>Enterobacteriaceae</taxon>
        <taxon>Salmonella</taxon>
    </lineage>
</organism>
<evidence type="ECO:0000255" key="1">
    <source>
        <dbReference type="HAMAP-Rule" id="MF_00139"/>
    </source>
</evidence>
<evidence type="ECO:0000255" key="2">
    <source>
        <dbReference type="PROSITE-ProRule" id="PRU01202"/>
    </source>
</evidence>
<sequence length="529" mass="57427">MQQRRPVRRALLSVSDKAGIIEFAQALSARGVELLSTGGTARLLAEKGLAVTEVSDYTGFPEMMDGRVKTLHPKVHGGILGRRGQDDAIMEQHHIAPIDMVVVNLYPFAETVAREGCSLEDAVENIDIGGPTMVRSAAKNHKDVAIVVKSSDYDAIIKEMDANEGSLTLDTRFDLAIKAFEHTAAYDSMIANYFGSMVPAYHGESKEAAGRFPRTLNLNFIKKQDMRYGENSHQQAAFYIEENVKEASVATAQQVQGKALSYNNIADTDAALECVKEFNEPACVIVKHANPCGVAVSTTILDAYDRAYKTDPTSAFGGIIAFNRELDAETAQAIISRQFVEVIIAPSATEDALKITAAKQNVRVLTCGQWAQRVPGLDFKRVNGGLLVQDRDLGMVSEAELRVVSKRQPTEQELRDALFCWKVAKFVKSNAIVYAKENMTIGIGAGQMSRVYSAKIAGIKAADEGLEVKGSAMASDAFFPFRDGIDAAAAVGVSCVIQPGGSIRDDEVIAAADEHGIAMIFTDMRHFRH</sequence>
<reference key="1">
    <citation type="journal article" date="2011" name="J. Bacteriol.">
        <title>Comparative genomics of 28 Salmonella enterica isolates: evidence for CRISPR-mediated adaptive sublineage evolution.</title>
        <authorList>
            <person name="Fricke W.F."/>
            <person name="Mammel M.K."/>
            <person name="McDermott P.F."/>
            <person name="Tartera C."/>
            <person name="White D.G."/>
            <person name="Leclerc J.E."/>
            <person name="Ravel J."/>
            <person name="Cebula T.A."/>
        </authorList>
    </citation>
    <scope>NUCLEOTIDE SEQUENCE [LARGE SCALE GENOMIC DNA]</scope>
    <source>
        <strain>CT_02021853</strain>
    </source>
</reference>
<feature type="chain" id="PRO_1000096089" description="Bifunctional purine biosynthesis protein PurH">
    <location>
        <begin position="1"/>
        <end position="529"/>
    </location>
</feature>
<feature type="domain" description="MGS-like" evidence="2">
    <location>
        <begin position="1"/>
        <end position="148"/>
    </location>
</feature>
<name>PUR9_SALDC</name>
<gene>
    <name evidence="1" type="primary">purH</name>
    <name type="ordered locus">SeD_A4583</name>
</gene>
<protein>
    <recommendedName>
        <fullName evidence="1">Bifunctional purine biosynthesis protein PurH</fullName>
    </recommendedName>
    <domain>
        <recommendedName>
            <fullName evidence="1">Phosphoribosylaminoimidazolecarboxamide formyltransferase</fullName>
            <ecNumber evidence="1">2.1.2.3</ecNumber>
        </recommendedName>
        <alternativeName>
            <fullName evidence="1">AICAR transformylase</fullName>
        </alternativeName>
    </domain>
    <domain>
        <recommendedName>
            <fullName evidence="1">IMP cyclohydrolase</fullName>
            <ecNumber evidence="1">3.5.4.10</ecNumber>
        </recommendedName>
        <alternativeName>
            <fullName evidence="1">ATIC</fullName>
        </alternativeName>
        <alternativeName>
            <fullName evidence="1">IMP synthase</fullName>
        </alternativeName>
        <alternativeName>
            <fullName evidence="1">Inosinicase</fullName>
        </alternativeName>
    </domain>
</protein>
<proteinExistence type="inferred from homology"/>
<keyword id="KW-0378">Hydrolase</keyword>
<keyword id="KW-0511">Multifunctional enzyme</keyword>
<keyword id="KW-0658">Purine biosynthesis</keyword>
<keyword id="KW-0808">Transferase</keyword>
<accession>B5FQM1</accession>
<dbReference type="EC" id="2.1.2.3" evidence="1"/>
<dbReference type="EC" id="3.5.4.10" evidence="1"/>
<dbReference type="EMBL" id="CP001144">
    <property type="protein sequence ID" value="ACH76450.1"/>
    <property type="molecule type" value="Genomic_DNA"/>
</dbReference>
<dbReference type="RefSeq" id="WP_001187491.1">
    <property type="nucleotide sequence ID" value="NC_011205.1"/>
</dbReference>
<dbReference type="SMR" id="B5FQM1"/>
<dbReference type="KEGG" id="sed:SeD_A4583"/>
<dbReference type="HOGENOM" id="CLU_016316_5_2_6"/>
<dbReference type="UniPathway" id="UPA00074">
    <property type="reaction ID" value="UER00133"/>
</dbReference>
<dbReference type="UniPathway" id="UPA00074">
    <property type="reaction ID" value="UER00135"/>
</dbReference>
<dbReference type="Proteomes" id="UP000008322">
    <property type="component" value="Chromosome"/>
</dbReference>
<dbReference type="GO" id="GO:0005829">
    <property type="term" value="C:cytosol"/>
    <property type="evidence" value="ECO:0007669"/>
    <property type="project" value="TreeGrafter"/>
</dbReference>
<dbReference type="GO" id="GO:0003937">
    <property type="term" value="F:IMP cyclohydrolase activity"/>
    <property type="evidence" value="ECO:0007669"/>
    <property type="project" value="UniProtKB-UniRule"/>
</dbReference>
<dbReference type="GO" id="GO:0004643">
    <property type="term" value="F:phosphoribosylaminoimidazolecarboxamide formyltransferase activity"/>
    <property type="evidence" value="ECO:0007669"/>
    <property type="project" value="UniProtKB-UniRule"/>
</dbReference>
<dbReference type="GO" id="GO:0006189">
    <property type="term" value="P:'de novo' IMP biosynthetic process"/>
    <property type="evidence" value="ECO:0007669"/>
    <property type="project" value="UniProtKB-UniRule"/>
</dbReference>
<dbReference type="CDD" id="cd01421">
    <property type="entry name" value="IMPCH"/>
    <property type="match status" value="1"/>
</dbReference>
<dbReference type="FunFam" id="3.40.140.20:FF:000001">
    <property type="entry name" value="Bifunctional purine biosynthesis protein PurH"/>
    <property type="match status" value="1"/>
</dbReference>
<dbReference type="FunFam" id="3.40.140.20:FF:000002">
    <property type="entry name" value="Bifunctional purine biosynthesis protein PurH"/>
    <property type="match status" value="1"/>
</dbReference>
<dbReference type="FunFam" id="3.40.50.1380:FF:000001">
    <property type="entry name" value="Bifunctional purine biosynthesis protein PurH"/>
    <property type="match status" value="1"/>
</dbReference>
<dbReference type="Gene3D" id="3.40.140.20">
    <property type="match status" value="2"/>
</dbReference>
<dbReference type="Gene3D" id="3.40.50.1380">
    <property type="entry name" value="Methylglyoxal synthase-like domain"/>
    <property type="match status" value="1"/>
</dbReference>
<dbReference type="HAMAP" id="MF_00139">
    <property type="entry name" value="PurH"/>
    <property type="match status" value="1"/>
</dbReference>
<dbReference type="InterPro" id="IPR024051">
    <property type="entry name" value="AICAR_Tfase_dup_dom_sf"/>
</dbReference>
<dbReference type="InterPro" id="IPR016193">
    <property type="entry name" value="Cytidine_deaminase-like"/>
</dbReference>
<dbReference type="InterPro" id="IPR011607">
    <property type="entry name" value="MGS-like_dom"/>
</dbReference>
<dbReference type="InterPro" id="IPR036914">
    <property type="entry name" value="MGS-like_dom_sf"/>
</dbReference>
<dbReference type="InterPro" id="IPR002695">
    <property type="entry name" value="PurH-like"/>
</dbReference>
<dbReference type="NCBIfam" id="NF002049">
    <property type="entry name" value="PRK00881.1"/>
    <property type="match status" value="1"/>
</dbReference>
<dbReference type="NCBIfam" id="TIGR00355">
    <property type="entry name" value="purH"/>
    <property type="match status" value="1"/>
</dbReference>
<dbReference type="PANTHER" id="PTHR11692:SF0">
    <property type="entry name" value="BIFUNCTIONAL PURINE BIOSYNTHESIS PROTEIN ATIC"/>
    <property type="match status" value="1"/>
</dbReference>
<dbReference type="PANTHER" id="PTHR11692">
    <property type="entry name" value="BIFUNCTIONAL PURINE BIOSYNTHESIS PROTEIN PURH"/>
    <property type="match status" value="1"/>
</dbReference>
<dbReference type="Pfam" id="PF01808">
    <property type="entry name" value="AICARFT_IMPCHas"/>
    <property type="match status" value="1"/>
</dbReference>
<dbReference type="Pfam" id="PF02142">
    <property type="entry name" value="MGS"/>
    <property type="match status" value="1"/>
</dbReference>
<dbReference type="PIRSF" id="PIRSF000414">
    <property type="entry name" value="AICARFT_IMPCHas"/>
    <property type="match status" value="1"/>
</dbReference>
<dbReference type="SMART" id="SM00798">
    <property type="entry name" value="AICARFT_IMPCHas"/>
    <property type="match status" value="1"/>
</dbReference>
<dbReference type="SMART" id="SM00851">
    <property type="entry name" value="MGS"/>
    <property type="match status" value="1"/>
</dbReference>
<dbReference type="SUPFAM" id="SSF53927">
    <property type="entry name" value="Cytidine deaminase-like"/>
    <property type="match status" value="1"/>
</dbReference>
<dbReference type="SUPFAM" id="SSF52335">
    <property type="entry name" value="Methylglyoxal synthase-like"/>
    <property type="match status" value="1"/>
</dbReference>
<dbReference type="PROSITE" id="PS51855">
    <property type="entry name" value="MGS"/>
    <property type="match status" value="1"/>
</dbReference>
<comment type="catalytic activity">
    <reaction evidence="1">
        <text>(6R)-10-formyltetrahydrofolate + 5-amino-1-(5-phospho-beta-D-ribosyl)imidazole-4-carboxamide = 5-formamido-1-(5-phospho-D-ribosyl)imidazole-4-carboxamide + (6S)-5,6,7,8-tetrahydrofolate</text>
        <dbReference type="Rhea" id="RHEA:22192"/>
        <dbReference type="ChEBI" id="CHEBI:57453"/>
        <dbReference type="ChEBI" id="CHEBI:58467"/>
        <dbReference type="ChEBI" id="CHEBI:58475"/>
        <dbReference type="ChEBI" id="CHEBI:195366"/>
        <dbReference type="EC" id="2.1.2.3"/>
    </reaction>
</comment>
<comment type="catalytic activity">
    <reaction evidence="1">
        <text>IMP + H2O = 5-formamido-1-(5-phospho-D-ribosyl)imidazole-4-carboxamide</text>
        <dbReference type="Rhea" id="RHEA:18445"/>
        <dbReference type="ChEBI" id="CHEBI:15377"/>
        <dbReference type="ChEBI" id="CHEBI:58053"/>
        <dbReference type="ChEBI" id="CHEBI:58467"/>
        <dbReference type="EC" id="3.5.4.10"/>
    </reaction>
</comment>
<comment type="pathway">
    <text evidence="1">Purine metabolism; IMP biosynthesis via de novo pathway; 5-formamido-1-(5-phospho-D-ribosyl)imidazole-4-carboxamide from 5-amino-1-(5-phospho-D-ribosyl)imidazole-4-carboxamide (10-formyl THF route): step 1/1.</text>
</comment>
<comment type="pathway">
    <text evidence="1">Purine metabolism; IMP biosynthesis via de novo pathway; IMP from 5-formamido-1-(5-phospho-D-ribosyl)imidazole-4-carboxamide: step 1/1.</text>
</comment>
<comment type="domain">
    <text evidence="1">The IMP cyclohydrolase activity resides in the N-terminal region.</text>
</comment>
<comment type="similarity">
    <text evidence="1">Belongs to the PurH family.</text>
</comment>